<proteinExistence type="inferred from homology"/>
<dbReference type="EMBL" id="CP001050">
    <property type="protein sequence ID" value="ACF29813.1"/>
    <property type="molecule type" value="Genomic_DNA"/>
</dbReference>
<dbReference type="RefSeq" id="WP_003688693.1">
    <property type="nucleotide sequence ID" value="NC_011035.1"/>
</dbReference>
<dbReference type="SMR" id="B4RLX6"/>
<dbReference type="KEGG" id="ngk:NGK_1136"/>
<dbReference type="HOGENOM" id="CLU_140930_0_0_4"/>
<dbReference type="Proteomes" id="UP000002564">
    <property type="component" value="Chromosome"/>
</dbReference>
<dbReference type="GO" id="GO:0043590">
    <property type="term" value="C:bacterial nucleoid"/>
    <property type="evidence" value="ECO:0007669"/>
    <property type="project" value="UniProtKB-UniRule"/>
</dbReference>
<dbReference type="GO" id="GO:0005829">
    <property type="term" value="C:cytosol"/>
    <property type="evidence" value="ECO:0007669"/>
    <property type="project" value="TreeGrafter"/>
</dbReference>
<dbReference type="GO" id="GO:0003677">
    <property type="term" value="F:DNA binding"/>
    <property type="evidence" value="ECO:0007669"/>
    <property type="project" value="UniProtKB-UniRule"/>
</dbReference>
<dbReference type="FunFam" id="3.30.1310.10:FF:000007">
    <property type="entry name" value="Nucleoid-associated protein NMC1380"/>
    <property type="match status" value="1"/>
</dbReference>
<dbReference type="Gene3D" id="3.30.1310.10">
    <property type="entry name" value="Nucleoid-associated protein YbaB-like domain"/>
    <property type="match status" value="1"/>
</dbReference>
<dbReference type="HAMAP" id="MF_00274">
    <property type="entry name" value="DNA_YbaB_EbfC"/>
    <property type="match status" value="1"/>
</dbReference>
<dbReference type="InterPro" id="IPR036894">
    <property type="entry name" value="YbaB-like_sf"/>
</dbReference>
<dbReference type="InterPro" id="IPR004401">
    <property type="entry name" value="YbaB/EbfC"/>
</dbReference>
<dbReference type="NCBIfam" id="TIGR00103">
    <property type="entry name" value="DNA_YbaB_EbfC"/>
    <property type="match status" value="1"/>
</dbReference>
<dbReference type="PANTHER" id="PTHR33449">
    <property type="entry name" value="NUCLEOID-ASSOCIATED PROTEIN YBAB"/>
    <property type="match status" value="1"/>
</dbReference>
<dbReference type="PANTHER" id="PTHR33449:SF1">
    <property type="entry name" value="NUCLEOID-ASSOCIATED PROTEIN YBAB"/>
    <property type="match status" value="1"/>
</dbReference>
<dbReference type="Pfam" id="PF02575">
    <property type="entry name" value="YbaB_DNA_bd"/>
    <property type="match status" value="1"/>
</dbReference>
<dbReference type="PIRSF" id="PIRSF004555">
    <property type="entry name" value="UCP004555"/>
    <property type="match status" value="1"/>
</dbReference>
<dbReference type="SUPFAM" id="SSF82607">
    <property type="entry name" value="YbaB-like"/>
    <property type="match status" value="1"/>
</dbReference>
<reference key="1">
    <citation type="journal article" date="2008" name="J. Bacteriol.">
        <title>Complete genome sequence of Neisseria gonorrhoeae NCCP11945.</title>
        <authorList>
            <person name="Chung G.T."/>
            <person name="Yoo J.S."/>
            <person name="Oh H.B."/>
            <person name="Lee Y.S."/>
            <person name="Cha S.H."/>
            <person name="Kim S.J."/>
            <person name="Yoo C.K."/>
        </authorList>
    </citation>
    <scope>NUCLEOTIDE SEQUENCE [LARGE SCALE GENOMIC DNA]</scope>
    <source>
        <strain>NCCP11945</strain>
    </source>
</reference>
<sequence length="111" mass="11983">MFGKAGLGGLMKQAQQMQENMKKAQAKLAETEIEGEAGNGLVKITMTCAHEVRKIDISPDLIQEAADDKEMLEDLILAALKSARGKAEETANKTMGAFTQDLPPGVGDFFR</sequence>
<name>Y1136_NEIG2</name>
<comment type="function">
    <text evidence="1">Binds to DNA and alters its conformation. May be involved in regulation of gene expression, nucleoid organization and DNA protection.</text>
</comment>
<comment type="subunit">
    <text evidence="1">Homodimer.</text>
</comment>
<comment type="subcellular location">
    <subcellularLocation>
        <location evidence="1">Cytoplasm</location>
        <location evidence="1">Nucleoid</location>
    </subcellularLocation>
</comment>
<comment type="similarity">
    <text evidence="1">Belongs to the YbaB/EbfC family.</text>
</comment>
<feature type="chain" id="PRO_1000114625" description="Nucleoid-associated protein NGK_1136">
    <location>
        <begin position="1"/>
        <end position="111"/>
    </location>
</feature>
<accession>B4RLX6</accession>
<organism>
    <name type="scientific">Neisseria gonorrhoeae (strain NCCP11945)</name>
    <dbReference type="NCBI Taxonomy" id="521006"/>
    <lineage>
        <taxon>Bacteria</taxon>
        <taxon>Pseudomonadati</taxon>
        <taxon>Pseudomonadota</taxon>
        <taxon>Betaproteobacteria</taxon>
        <taxon>Neisseriales</taxon>
        <taxon>Neisseriaceae</taxon>
        <taxon>Neisseria</taxon>
    </lineage>
</organism>
<evidence type="ECO:0000255" key="1">
    <source>
        <dbReference type="HAMAP-Rule" id="MF_00274"/>
    </source>
</evidence>
<protein>
    <recommendedName>
        <fullName evidence="1">Nucleoid-associated protein NGK_1136</fullName>
    </recommendedName>
</protein>
<keyword id="KW-0963">Cytoplasm</keyword>
<keyword id="KW-0238">DNA-binding</keyword>
<gene>
    <name type="ordered locus">NGK_1136</name>
</gene>